<sequence length="1682" mass="192463">MKIIFFLCSFLFFIINTQCVTHESYQELVKKLEALEDAVLTGYSLFQKEKMVLKDGANTQVVAKPADAVSTQSAKNPPGATVPSGTASTKGAIRSPGAANPSDDSSDSDAKSYADLKHRVQNYLFTIKELKYPELFDLTNHMLTLCDNIHGFKYLIDGYEEINELLYKLNFYFDLLRAKLNDVCANDYCQIPFNLKIRANELDVLKKLVFGYRKPLDFIKDNVGKMEDYIKKNKTTIANINELIEGSKKTIDQNKNADNEEGKKKLYQAQYDLFIYNKQLQEAHNLISVLEKRIDTLKKNENIKKLLEDIDKIKIDAEKPTTGVNQILSLRLEKESRHEEKIKEIAKTIKFNIDRLFTDPLELEYYLREKNKKVDVTPKSQDPTKSVQIPKVPYPNGIVYPLPLTDIHNSLAADNDKNSYGDLMNPHTKEKINEKIITDNKERKIFINNIKKQIDLEEKNINHTKEQNKKLLEDYEKSKKDYEELLEKFYEMKFNNNFNKDVVDKIFSARYTYNVEKQRYNNKFSSSNNSVYNVQKLKKALSYLEDYSLRKGISEKDFNHYYTLKTGLEADIKKLTEEIKSSENKILEKNFKGLTHSANASLEVSDIVKLQVQKVLLIKKIEDLRKIELFLKNAQLKDSIHVPNIYKPQNKPEPYYLIVLKKEVDKLKEFIPKVKDMLKKEQAVLSSITQPLVAASETTEDGGHSTHTLSQSGETEVTEETEETVGHTTTVTITLPPKEVKVVENSIEHKSNDNSQALTKTVYLKKLDEFLTKSYICHKYILVSNSSMDQKLLEVYNLTPEENELKSCDRLDLLFNIQNNIPAMYSLYDSMNNDLQHLFFELYQKEMIYYLHKLKEENHIKKLLEEPKQITGTSSTSSPGNTTVNTAQSATHSNSQNQQSNASSTNTQNGVAVSSGPAVVEESHDPLTVLSISNDLKGIVSLLNLGNKTKVPNPLTISTTEMEKFYENILKIMIPIFNDDIKQFVKSNSKVITGLTETQKNALNDEIKKLKDTLQLSFDLYNKYKLKLDRLFNKKKELGQDKMQIKKLTLLKEQLESKLNSLNNPHNVLQNFSVFFNKKKEAEIAETENTLENTKILLKHYKGLVKYYNGESSPLKTLSEVSIQTEDNYANLEKFRVLSKIDGKLNDNLHLGKKKLSFLSSGLHHLITELKEVIKNKNYTGNSPSENNKKVNEALKSYENFLPEAKVTTVVTPPQPDVTPSPLSVRVSGSSGSTKEETQIPTSGSLLTELQQVVQLQNYDEEDDSLVVLPIFGESEDNDEYLDQVVTGEAISVTMDNILSGFENEYDVIYLKPLAGVYRSLKKQIEKNIFTFNLNLNDILNSRLKKRKYFLDVLESDLMQFKHISSNEYIIEDSFKLLNSEQKNTLLKSYKYIKESVENDIKFAQEGISYYEKVLAKYKDDLESIKKVIKEEKEFPSSPPTTPPSPAKTDEQKKESKFLPFLTNIETLYNNLVNKIDDYLINLKAKINDCNVEKDEAHVKITKLSDLKAIDDKIDLFKNPYDFEAIKKLINDDTKKDMLGKLLSTGLVQNFPNTIISKLIEGKFQDMLNISQHQCVKKQCPQNSGCFRHLDEREECKCLLNYKQEGDKCVENPNPTCNENNGGCDADAKCTEEDSGSNGKKITCECTKPDSYPLFDGIFCSSSNFLGISFLLILMLILYSFI</sequence>
<organism>
    <name type="scientific">Plasmodium falciparum (isolate ro-33 / Ghana)</name>
    <dbReference type="NCBI Taxonomy" id="5834"/>
    <lineage>
        <taxon>Eukaryota</taxon>
        <taxon>Sar</taxon>
        <taxon>Alveolata</taxon>
        <taxon>Apicomplexa</taxon>
        <taxon>Aconoidasida</taxon>
        <taxon>Haemosporida</taxon>
        <taxon>Plasmodiidae</taxon>
        <taxon>Plasmodium</taxon>
        <taxon>Plasmodium (Laverania)</taxon>
    </lineage>
</organism>
<comment type="function">
    <text evidence="2">During the asexual blood stage, involved in merozoite egress from host erythrocytes possibly via its interaction with the host cytoskeleton protein spectrin resulting in the destabilization of the host cytoskeleton and thus leading to erythrocyte cell membrane rupture. Involved in the binding to host erythrocytes and is required for host erythrocyte invasion.</text>
</comment>
<comment type="function">
    <molecule>p33 subunit</molecule>
    <text evidence="2">By binding to host proinflammatory cytokine S100P may interfere with host immune responses.</text>
</comment>
<comment type="function">
    <molecule>p19 subunit</molecule>
    <text evidence="2">Involved in merozoite invasion of host erythrocytes. May play a role in the biogenesis and/or function of the food vacuole during the intraerythrocytic development.</text>
</comment>
<comment type="subunit">
    <text evidence="2">Forms a complex composed of subunits p83, p30, p38, and p42 which remain non-covalently associated; the complex is formed at the merozoite surface prior to egress from host erythrocytes. Forms a complex composed of processed MSP1 subunits, MSP6 subunit p36 and MSP7; the complex is formed at the merozoite surface prior to egress from host erythrocytes. Within the complex, interacts (via subunit p38) with MSP6 subunit p36 and (via subunits p83, p30 and p38) with MSP7 (via subunit p22). Forms a complex composed of MSP1, MSP6, DBLMSP1 and DBLMSP2. Within the complex, interacts (via subunit p38) with DBLMSP1 and DBLMSP2. Forms a complex composed of MSP1, and rhoptry proteins RhopH3, RAP1 and CLAG9/RhopH3. Within the complex, interacts (via subunits p42 and p19) with RhopH3 (via C-terminus). Forms a complex composed of MSP1, MSP6, MSP7, MSP9 and MSP3; within the complex, MSP6 and MSP9 mediate the binding to the host erythrocyte. Interacts (via subunits p19 and p42) with MSP9; the interaction is direct; MSP1 subunits p19 or p42, and MSP9 form a co-ligand complex that interacts with host SLC4A1/Band 3 protein. May interact with PFD6. Interacts with host spectrin.</text>
</comment>
<comment type="subunit">
    <molecule>p83 subunit</molecule>
    <text evidence="2">Interacts with host glycophorin GYPA in a sialic acid-independent manner.</text>
</comment>
<comment type="subunit">
    <molecule>p33 subunit</molecule>
    <text evidence="2">Interacts with host proinflammatory cytokine S100P; the interaction blocks S100P inflammatory and chemotactic activities.</text>
</comment>
<comment type="subunit">
    <molecule>p42 subunit</molecule>
    <text evidence="2">Interacts with host SLC4A1/Band 3 (via 5ABC region) on the host erythrocyte surface in a sialic acid-independent manner.</text>
</comment>
<comment type="subcellular location">
    <subcellularLocation>
        <location evidence="2">Cell membrane</location>
        <topology evidence="3">Lipid-anchor</topology>
        <topology evidence="3">GPI-anchor</topology>
    </subcellularLocation>
    <subcellularLocation>
        <location evidence="2">Secreted</location>
    </subcellularLocation>
</comment>
<comment type="subcellular location">
    <molecule>p19 subunit</molecule>
    <subcellularLocation>
        <location evidence="2">Cell membrane</location>
        <topology evidence="3">Lipid-anchor</topology>
        <topology evidence="3">GPI-anchor</topology>
    </subcellularLocation>
    <subcellularLocation>
        <location evidence="2">Vacuole membrane</location>
        <topology evidence="3">Lipid-anchor</topology>
        <topology evidence="3">GPI-anchor</topology>
    </subcellularLocation>
    <text evidence="2">In free merozoites, localizes to the cell membrane (By similarity). Following merozoite invasion of host erythrocytes, p19 subunit is endocytosed into small food vacuoles in the ring stage and persists throughout the subsequent intra-erythrocytic stages at the surface of the food vacuole where it forms clusters (By similarity).</text>
</comment>
<comment type="PTM">
    <text evidence="2">The p190 precursor is cleaved by SUB1 prior to merozoite egress into 4 subunits p83, p30, p38, and p42 which remain non-covalently associated. SUB1-mediated proteolytic cleavage occurs in an orderly manner; the first cleavage occurs at the p30/p38 site, followed by cleavage at the p83/p30 site, the last cleavage occurs at the p38/p42 site. The order of cleavage is essential for parasite viability. SUB1-mediated processing is essential for merozoite egress. In a second processing step during erythrocyte invasion, p42 is cleaved by SUB2 into p33 and p19; the latter remains attached to the merozoite surface via its GPI-anchor and is endocytosed during the subsequent ring stage.</text>
</comment>
<comment type="polymorphism">
    <text evidence="5 6">The sequence varies across Plasmodium strains (PubMed:3327688, PubMed:7628566). There are two major dimorphic forms of MSP1, typified by those expressed by the 3D7 and Wellcome P.falciparum isolates (PubMed:3327688, PubMed:7628566).</text>
</comment>
<dbReference type="EMBL" id="M35727">
    <property type="protein sequence ID" value="AAA29715.1"/>
    <property type="molecule type" value="mRNA"/>
</dbReference>
<dbReference type="EMBL" id="Y00087">
    <property type="protein sequence ID" value="CAA68280.1"/>
    <property type="molecule type" value="Genomic_DNA"/>
</dbReference>
<dbReference type="EMBL" id="Z35326">
    <property type="protein sequence ID" value="CAA84555.1"/>
    <property type="molecule type" value="Genomic_DNA"/>
</dbReference>
<dbReference type="BMRB" id="P19598"/>
<dbReference type="SMR" id="P19598"/>
<dbReference type="GlyCosmos" id="P19598">
    <property type="glycosylation" value="11 sites, No reported glycans"/>
</dbReference>
<dbReference type="GO" id="GO:0005576">
    <property type="term" value="C:extracellular region"/>
    <property type="evidence" value="ECO:0007669"/>
    <property type="project" value="UniProtKB-SubCell"/>
</dbReference>
<dbReference type="GO" id="GO:0005886">
    <property type="term" value="C:plasma membrane"/>
    <property type="evidence" value="ECO:0007669"/>
    <property type="project" value="UniProtKB-SubCell"/>
</dbReference>
<dbReference type="GO" id="GO:0098552">
    <property type="term" value="C:side of membrane"/>
    <property type="evidence" value="ECO:0007669"/>
    <property type="project" value="UniProtKB-KW"/>
</dbReference>
<dbReference type="GO" id="GO:0005774">
    <property type="term" value="C:vacuolar membrane"/>
    <property type="evidence" value="ECO:0007669"/>
    <property type="project" value="UniProtKB-SubCell"/>
</dbReference>
<dbReference type="Gene3D" id="2.10.25.10">
    <property type="entry name" value="Laminin"/>
    <property type="match status" value="2"/>
</dbReference>
<dbReference type="InterPro" id="IPR010901">
    <property type="entry name" value="MSP1_C"/>
</dbReference>
<dbReference type="InterPro" id="IPR024730">
    <property type="entry name" value="MSP1_EGF_1"/>
</dbReference>
<dbReference type="Pfam" id="PF12946">
    <property type="entry name" value="EGF_MSP1_1"/>
    <property type="match status" value="1"/>
</dbReference>
<dbReference type="Pfam" id="PF07462">
    <property type="entry name" value="MSP1_C"/>
    <property type="match status" value="1"/>
</dbReference>
<dbReference type="SUPFAM" id="SSF57196">
    <property type="entry name" value="EGF/Laminin"/>
    <property type="match status" value="2"/>
</dbReference>
<protein>
    <recommendedName>
        <fullName evidence="2">Merozoite surface protein 1</fullName>
    </recommendedName>
    <alternativeName>
        <fullName evidence="8">Merozoite surface antigen</fullName>
    </alternativeName>
    <alternativeName>
        <fullName evidence="1">PMMSA</fullName>
    </alternativeName>
    <alternativeName>
        <fullName evidence="7">p190</fullName>
    </alternativeName>
    <component>
        <recommendedName>
            <fullName evidence="2">p83 subunit</fullName>
        </recommendedName>
    </component>
    <component>
        <recommendedName>
            <fullName evidence="2">p30 subunit</fullName>
        </recommendedName>
    </component>
    <component>
        <recommendedName>
            <fullName evidence="2">p38 subunit</fullName>
        </recommendedName>
    </component>
    <component>
        <recommendedName>
            <fullName evidence="2">p42 subunit</fullName>
        </recommendedName>
    </component>
    <component>
        <recommendedName>
            <fullName evidence="2">p33 subunit</fullName>
        </recommendedName>
    </component>
    <component>
        <recommendedName>
            <fullName evidence="2">p19 subunit</fullName>
        </recommendedName>
    </component>
</protein>
<accession>P19598</accession>
<accession>Q25921</accession>
<keyword id="KW-1003">Cell membrane</keyword>
<keyword id="KW-1015">Disulfide bond</keyword>
<keyword id="KW-0245">EGF-like domain</keyword>
<keyword id="KW-0325">Glycoprotein</keyword>
<keyword id="KW-0336">GPI-anchor</keyword>
<keyword id="KW-0449">Lipoprotein</keyword>
<keyword id="KW-0461">Malaria</keyword>
<keyword id="KW-0472">Membrane</keyword>
<keyword id="KW-0477">Merozoite</keyword>
<keyword id="KW-0677">Repeat</keyword>
<keyword id="KW-0964">Secreted</keyword>
<keyword id="KW-0732">Signal</keyword>
<keyword id="KW-0926">Vacuole</keyword>
<gene>
    <name evidence="2" type="primary">MSP1</name>
</gene>
<proteinExistence type="evidence at transcript level"/>
<feature type="signal peptide" evidence="3">
    <location>
        <begin position="1"/>
        <end position="19"/>
    </location>
</feature>
<feature type="chain" id="PRO_0000024552" description="Merozoite surface protein 1">
    <location>
        <begin position="20"/>
        <end position="1661"/>
    </location>
</feature>
<feature type="chain" id="PRO_0000459266" description="p83 subunit" evidence="2">
    <location>
        <begin position="20"/>
        <end position="695"/>
    </location>
</feature>
<feature type="chain" id="PRO_0000459267" description="p30 subunit" evidence="2">
    <location>
        <begin position="696"/>
        <end position="873"/>
    </location>
</feature>
<feature type="chain" id="PRO_0000459268" description="p38 subunit" evidence="2">
    <location>
        <begin position="874"/>
        <end position="1289"/>
    </location>
</feature>
<feature type="chain" id="PRO_0000459269" description="p42 subunit" evidence="2">
    <location>
        <begin position="1290"/>
        <end position="1661"/>
    </location>
</feature>
<feature type="chain" id="PRO_0000459270" description="p33 subunit" evidence="2">
    <location>
        <begin position="1290"/>
        <end position="1568"/>
    </location>
</feature>
<feature type="chain" id="PRO_0000459271" description="p19 subunit" evidence="2">
    <location>
        <begin position="1569"/>
        <end position="1661"/>
    </location>
</feature>
<feature type="propeptide" id="PRO_0000024553" description="Removed in mature form" evidence="3">
    <location>
        <begin position="1662"/>
        <end position="1682"/>
    </location>
</feature>
<feature type="domain" description="EGF-like 1" evidence="2">
    <location>
        <begin position="1573"/>
        <end position="1613"/>
    </location>
</feature>
<feature type="domain" description="EGF-like 2" evidence="2">
    <location>
        <begin position="1614"/>
        <end position="1661"/>
    </location>
</feature>
<feature type="region of interest" description="Disordered" evidence="4">
    <location>
        <begin position="68"/>
        <end position="110"/>
    </location>
</feature>
<feature type="region of interest" description="Disordered" evidence="4">
    <location>
        <begin position="696"/>
        <end position="729"/>
    </location>
</feature>
<feature type="region of interest" description="Disordered" evidence="4">
    <location>
        <begin position="870"/>
        <end position="918"/>
    </location>
</feature>
<feature type="region of interest" description="Disordered" evidence="4">
    <location>
        <begin position="1212"/>
        <end position="1241"/>
    </location>
</feature>
<feature type="region of interest" description="Disordered" evidence="4">
    <location>
        <begin position="1433"/>
        <end position="1453"/>
    </location>
</feature>
<feature type="compositionally biased region" description="Low complexity" evidence="4">
    <location>
        <begin position="871"/>
        <end position="909"/>
    </location>
</feature>
<feature type="compositionally biased region" description="Polar residues" evidence="4">
    <location>
        <begin position="1227"/>
        <end position="1241"/>
    </location>
</feature>
<feature type="compositionally biased region" description="Pro residues" evidence="4">
    <location>
        <begin position="1437"/>
        <end position="1446"/>
    </location>
</feature>
<feature type="lipid moiety-binding region" description="GPI-anchor amidated serine" evidence="3">
    <location>
        <position position="1661"/>
    </location>
</feature>
<feature type="glycosylation site" description="N-linked (GlcNAc...) asparagine" evidence="3">
    <location>
        <position position="233"/>
    </location>
</feature>
<feature type="glycosylation site" description="N-linked (GlcNAc...) asparagine" evidence="3">
    <location>
        <position position="462"/>
    </location>
</feature>
<feature type="glycosylation site" description="N-linked (GlcNAc...) asparagine" evidence="3">
    <location>
        <position position="528"/>
    </location>
</feature>
<feature type="glycosylation site" description="N-linked (GlcNAc...) asparagine" evidence="3">
    <location>
        <position position="599"/>
    </location>
</feature>
<feature type="glycosylation site" description="N-linked (GlcNAc...) asparagine" evidence="3">
    <location>
        <position position="785"/>
    </location>
</feature>
<feature type="glycosylation site" description="N-linked (GlcNAc...) asparagine" evidence="3">
    <location>
        <position position="881"/>
    </location>
</feature>
<feature type="glycosylation site" description="N-linked (GlcNAc...) asparagine" evidence="3">
    <location>
        <position position="901"/>
    </location>
</feature>
<feature type="glycosylation site" description="N-linked (GlcNAc...) asparagine" evidence="3">
    <location>
        <position position="947"/>
    </location>
</feature>
<feature type="glycosylation site" description="N-linked (GlcNAc...) asparagine" evidence="3">
    <location>
        <position position="1071"/>
    </location>
</feature>
<feature type="glycosylation site" description="N-linked (GlcNAc...) asparagine" evidence="3">
    <location>
        <position position="1178"/>
    </location>
</feature>
<feature type="glycosylation site" description="N-linked (GlcNAc...) asparagine" evidence="3">
    <location>
        <position position="1569"/>
    </location>
</feature>
<feature type="disulfide bond" evidence="2">
    <location>
        <begin position="1575"/>
        <end position="1586"/>
    </location>
</feature>
<feature type="disulfide bond" evidence="2">
    <location>
        <begin position="1580"/>
        <end position="1596"/>
    </location>
</feature>
<feature type="disulfide bond" evidence="2">
    <location>
        <begin position="1598"/>
        <end position="1609"/>
    </location>
</feature>
<feature type="disulfide bond" evidence="2">
    <location>
        <begin position="1617"/>
        <end position="1630"/>
    </location>
</feature>
<feature type="disulfide bond" evidence="2">
    <location>
        <begin position="1624"/>
        <end position="1644"/>
    </location>
</feature>
<feature type="disulfide bond" evidence="2">
    <location>
        <begin position="1646"/>
        <end position="1660"/>
    </location>
</feature>
<name>MSP1_PLAF3</name>
<evidence type="ECO:0000250" key="1">
    <source>
        <dbReference type="UniProtKB" id="P13819"/>
    </source>
</evidence>
<evidence type="ECO:0000250" key="2">
    <source>
        <dbReference type="UniProtKB" id="Q8I0U8"/>
    </source>
</evidence>
<evidence type="ECO:0000255" key="3"/>
<evidence type="ECO:0000256" key="4">
    <source>
        <dbReference type="SAM" id="MobiDB-lite"/>
    </source>
</evidence>
<evidence type="ECO:0000269" key="5">
    <source>
    </source>
</evidence>
<evidence type="ECO:0000269" key="6">
    <source>
    </source>
</evidence>
<evidence type="ECO:0000303" key="7">
    <source>
    </source>
</evidence>
<evidence type="ECO:0000303" key="8">
    <source>
    </source>
</evidence>
<reference key="1">
    <citation type="journal article" date="1987" name="EMBO J.">
        <title>A naturally occurring gene encoding the major surface antigen precursor p190 of Plasmodium falciparum lacks tripeptide repeats.</title>
        <authorList>
            <person name="Certa U."/>
            <person name="Rotmann D."/>
            <person name="Matile H."/>
            <person name="Reber-Liske R."/>
        </authorList>
    </citation>
    <scope>NUCLEOTIDE SEQUENCE [GENOMIC DNA / MRNA] OF 1-1061</scope>
    <scope>POLYMORPHISM</scope>
</reference>
<reference key="2">
    <citation type="journal article" date="1995" name="Exp. Parasitol.">
        <title>Plasmodium falciparum: variations within the C-terminal region of merozoite surface antigen-1.</title>
        <authorList>
            <person name="Tolle R."/>
            <person name="Bujard H."/>
            <person name="Cooper J.A."/>
        </authorList>
    </citation>
    <scope>NUCLEOTIDE SEQUENCE [GENOMIC DNA] OF 1032-1682</scope>
    <scope>POLYMORPHISM</scope>
</reference>